<evidence type="ECO:0000255" key="1">
    <source>
        <dbReference type="HAMAP-Rule" id="MF_00816"/>
    </source>
</evidence>
<name>Y2693_AERS4</name>
<accession>A4SP90</accession>
<gene>
    <name type="ordered locus">ASA_2693</name>
</gene>
<reference key="1">
    <citation type="journal article" date="2008" name="BMC Genomics">
        <title>The genome of Aeromonas salmonicida subsp. salmonicida A449: insights into the evolution of a fish pathogen.</title>
        <authorList>
            <person name="Reith M.E."/>
            <person name="Singh R.K."/>
            <person name="Curtis B."/>
            <person name="Boyd J.M."/>
            <person name="Bouevitch A."/>
            <person name="Kimball J."/>
            <person name="Munholland J."/>
            <person name="Murphy C."/>
            <person name="Sarty D."/>
            <person name="Williams J."/>
            <person name="Nash J.H."/>
            <person name="Johnson S.C."/>
            <person name="Brown L.L."/>
        </authorList>
    </citation>
    <scope>NUCLEOTIDE SEQUENCE [LARGE SCALE GENOMIC DNA]</scope>
    <source>
        <strain>A449</strain>
    </source>
</reference>
<organism>
    <name type="scientific">Aeromonas salmonicida (strain A449)</name>
    <dbReference type="NCBI Taxonomy" id="382245"/>
    <lineage>
        <taxon>Bacteria</taxon>
        <taxon>Pseudomonadati</taxon>
        <taxon>Pseudomonadota</taxon>
        <taxon>Gammaproteobacteria</taxon>
        <taxon>Aeromonadales</taxon>
        <taxon>Aeromonadaceae</taxon>
        <taxon>Aeromonas</taxon>
    </lineage>
</organism>
<protein>
    <recommendedName>
        <fullName evidence="1">UPF0352 protein ASA_2693</fullName>
    </recommendedName>
</protein>
<dbReference type="EMBL" id="CP000644">
    <property type="protein sequence ID" value="ABO90712.1"/>
    <property type="molecule type" value="Genomic_DNA"/>
</dbReference>
<dbReference type="RefSeq" id="WP_005310102.1">
    <property type="nucleotide sequence ID" value="NC_009348.1"/>
</dbReference>
<dbReference type="SMR" id="A4SP90"/>
<dbReference type="STRING" id="29491.GCA_000820065_00120"/>
<dbReference type="KEGG" id="asa:ASA_2693"/>
<dbReference type="eggNOG" id="COG3082">
    <property type="taxonomic scope" value="Bacteria"/>
</dbReference>
<dbReference type="HOGENOM" id="CLU_175457_0_0_6"/>
<dbReference type="Proteomes" id="UP000000225">
    <property type="component" value="Chromosome"/>
</dbReference>
<dbReference type="Gene3D" id="1.10.3390.10">
    <property type="entry name" value="YejL-like"/>
    <property type="match status" value="1"/>
</dbReference>
<dbReference type="HAMAP" id="MF_00816">
    <property type="entry name" value="UPF0352"/>
    <property type="match status" value="1"/>
</dbReference>
<dbReference type="InterPro" id="IPR009857">
    <property type="entry name" value="UPF0352"/>
</dbReference>
<dbReference type="InterPro" id="IPR023202">
    <property type="entry name" value="YejL_sf"/>
</dbReference>
<dbReference type="NCBIfam" id="NF010242">
    <property type="entry name" value="PRK13689.1"/>
    <property type="match status" value="1"/>
</dbReference>
<dbReference type="Pfam" id="PF07208">
    <property type="entry name" value="DUF1414"/>
    <property type="match status" value="1"/>
</dbReference>
<dbReference type="PIRSF" id="PIRSF006188">
    <property type="entry name" value="UCP006188"/>
    <property type="match status" value="1"/>
</dbReference>
<dbReference type="SUPFAM" id="SSF158651">
    <property type="entry name" value="YejL-like"/>
    <property type="match status" value="1"/>
</dbReference>
<comment type="similarity">
    <text evidence="1">Belongs to the UPF0352 family.</text>
</comment>
<sequence length="75" mass="8383">MPIVSKYTNQQFDDLMNDLITVLEKHKAPVDLSLMVLGNVTTNIINGMAPAQRQAITEKYVQALTSSVDTRHDTH</sequence>
<proteinExistence type="inferred from homology"/>
<feature type="chain" id="PRO_1000062298" description="UPF0352 protein ASA_2693">
    <location>
        <begin position="1"/>
        <end position="75"/>
    </location>
</feature>